<protein>
    <recommendedName>
        <fullName evidence="1">ATP-dependent 6-phosphofructokinase</fullName>
        <shortName evidence="1">ATP-PFK</shortName>
        <shortName evidence="1">Phosphofructokinase</shortName>
        <ecNumber evidence="1">2.7.1.11</ecNumber>
    </recommendedName>
    <alternativeName>
        <fullName evidence="1">Phosphohexokinase</fullName>
    </alternativeName>
</protein>
<proteinExistence type="inferred from homology"/>
<reference key="1">
    <citation type="journal article" date="2010" name="Genome Biol.">
        <title>Structure and dynamics of the pan-genome of Streptococcus pneumoniae and closely related species.</title>
        <authorList>
            <person name="Donati C."/>
            <person name="Hiller N.L."/>
            <person name="Tettelin H."/>
            <person name="Muzzi A."/>
            <person name="Croucher N.J."/>
            <person name="Angiuoli S.V."/>
            <person name="Oggioni M."/>
            <person name="Dunning Hotopp J.C."/>
            <person name="Hu F.Z."/>
            <person name="Riley D.R."/>
            <person name="Covacci A."/>
            <person name="Mitchell T.J."/>
            <person name="Bentley S.D."/>
            <person name="Kilian M."/>
            <person name="Ehrlich G.D."/>
            <person name="Rappuoli R."/>
            <person name="Moxon E.R."/>
            <person name="Masignani V."/>
        </authorList>
    </citation>
    <scope>NUCLEOTIDE SEQUENCE [LARGE SCALE GENOMIC DNA]</scope>
    <source>
        <strain>Taiwan19F-14</strain>
    </source>
</reference>
<evidence type="ECO:0000255" key="1">
    <source>
        <dbReference type="HAMAP-Rule" id="MF_00339"/>
    </source>
</evidence>
<accession>C1CRZ7</accession>
<keyword id="KW-0021">Allosteric enzyme</keyword>
<keyword id="KW-0067">ATP-binding</keyword>
<keyword id="KW-0963">Cytoplasm</keyword>
<keyword id="KW-0324">Glycolysis</keyword>
<keyword id="KW-0418">Kinase</keyword>
<keyword id="KW-0460">Magnesium</keyword>
<keyword id="KW-0479">Metal-binding</keyword>
<keyword id="KW-0547">Nucleotide-binding</keyword>
<keyword id="KW-0808">Transferase</keyword>
<sequence length="335" mass="35174">MKRIAVLTSGGDAPGMNAAIRAVVRQAISEGMEVFGIYDGYAGMVAGEIHPLDAASVGDIISRGGTFLHSARYPEFAQLEGQLKGIEQLKKHGIEGVVVIGGDGSYHGAMRLTEHGFPAIGLPGTIDNDIVGTDFTIGFDTAVTTAMDAIDKIRDTSSSHRRTFVIEVMGRNAGDIALWAGIATGADEIIIPEAGFKMEDIVASIKAGYECGKKHNIIVLAEGVMSAAEFGQKLKEAGDTSDLRVTELGHIQRGGSPTARDRVLASRMGAHAVKLLKEGIGGVAVGIRNEKMVENPILGTAEEGALFSLTAEGKIVVNNPHKADIELSSLNKSLS</sequence>
<name>PFKA_STRZT</name>
<gene>
    <name evidence="1" type="primary">pfkA</name>
    <name type="ordered locus">SPT_1303</name>
</gene>
<organism>
    <name type="scientific">Streptococcus pneumoniae (strain Taiwan19F-14)</name>
    <dbReference type="NCBI Taxonomy" id="487213"/>
    <lineage>
        <taxon>Bacteria</taxon>
        <taxon>Bacillati</taxon>
        <taxon>Bacillota</taxon>
        <taxon>Bacilli</taxon>
        <taxon>Lactobacillales</taxon>
        <taxon>Streptococcaceae</taxon>
        <taxon>Streptococcus</taxon>
    </lineage>
</organism>
<feature type="chain" id="PRO_1000133288" description="ATP-dependent 6-phosphofructokinase">
    <location>
        <begin position="1"/>
        <end position="335"/>
    </location>
</feature>
<feature type="active site" description="Proton acceptor" evidence="1">
    <location>
        <position position="127"/>
    </location>
</feature>
<feature type="binding site" evidence="1">
    <location>
        <position position="11"/>
    </location>
    <ligand>
        <name>ATP</name>
        <dbReference type="ChEBI" id="CHEBI:30616"/>
    </ligand>
</feature>
<feature type="binding site" evidence="1">
    <location>
        <begin position="21"/>
        <end position="25"/>
    </location>
    <ligand>
        <name>ADP</name>
        <dbReference type="ChEBI" id="CHEBI:456216"/>
        <note>allosteric activator; ligand shared between dimeric partners</note>
    </ligand>
</feature>
<feature type="binding site" evidence="1">
    <location>
        <begin position="72"/>
        <end position="73"/>
    </location>
    <ligand>
        <name>ATP</name>
        <dbReference type="ChEBI" id="CHEBI:30616"/>
    </ligand>
</feature>
<feature type="binding site" evidence="1">
    <location>
        <begin position="102"/>
        <end position="105"/>
    </location>
    <ligand>
        <name>ATP</name>
        <dbReference type="ChEBI" id="CHEBI:30616"/>
    </ligand>
</feature>
<feature type="binding site" evidence="1">
    <location>
        <position position="103"/>
    </location>
    <ligand>
        <name>Mg(2+)</name>
        <dbReference type="ChEBI" id="CHEBI:18420"/>
        <note>catalytic</note>
    </ligand>
</feature>
<feature type="binding site" description="in other chain" evidence="1">
    <location>
        <begin position="125"/>
        <end position="127"/>
    </location>
    <ligand>
        <name>substrate</name>
        <note>ligand shared between dimeric partners</note>
    </ligand>
</feature>
<feature type="binding site" description="in other chain" evidence="1">
    <location>
        <position position="154"/>
    </location>
    <ligand>
        <name>ADP</name>
        <dbReference type="ChEBI" id="CHEBI:456216"/>
        <note>allosteric activator; ligand shared between dimeric partners</note>
    </ligand>
</feature>
<feature type="binding site" evidence="1">
    <location>
        <position position="162"/>
    </location>
    <ligand>
        <name>substrate</name>
        <note>ligand shared between dimeric partners</note>
    </ligand>
</feature>
<feature type="binding site" description="in other chain" evidence="1">
    <location>
        <begin position="169"/>
        <end position="171"/>
    </location>
    <ligand>
        <name>substrate</name>
        <note>ligand shared between dimeric partners</note>
    </ligand>
</feature>
<feature type="binding site" description="in other chain" evidence="1">
    <location>
        <begin position="185"/>
        <end position="187"/>
    </location>
    <ligand>
        <name>ADP</name>
        <dbReference type="ChEBI" id="CHEBI:456216"/>
        <note>allosteric activator; ligand shared between dimeric partners</note>
    </ligand>
</feature>
<feature type="binding site" description="in other chain" evidence="1">
    <location>
        <begin position="213"/>
        <end position="215"/>
    </location>
    <ligand>
        <name>ADP</name>
        <dbReference type="ChEBI" id="CHEBI:456216"/>
        <note>allosteric activator; ligand shared between dimeric partners</note>
    </ligand>
</feature>
<feature type="binding site" description="in other chain" evidence="1">
    <location>
        <position position="222"/>
    </location>
    <ligand>
        <name>substrate</name>
        <note>ligand shared between dimeric partners</note>
    </ligand>
</feature>
<feature type="binding site" evidence="1">
    <location>
        <position position="244"/>
    </location>
    <ligand>
        <name>substrate</name>
        <note>ligand shared between dimeric partners</note>
    </ligand>
</feature>
<feature type="binding site" description="in other chain" evidence="1">
    <location>
        <begin position="250"/>
        <end position="253"/>
    </location>
    <ligand>
        <name>substrate</name>
        <note>ligand shared between dimeric partners</note>
    </ligand>
</feature>
<comment type="function">
    <text evidence="1">Catalyzes the phosphorylation of D-fructose 6-phosphate to fructose 1,6-bisphosphate by ATP, the first committing step of glycolysis.</text>
</comment>
<comment type="catalytic activity">
    <reaction evidence="1">
        <text>beta-D-fructose 6-phosphate + ATP = beta-D-fructose 1,6-bisphosphate + ADP + H(+)</text>
        <dbReference type="Rhea" id="RHEA:16109"/>
        <dbReference type="ChEBI" id="CHEBI:15378"/>
        <dbReference type="ChEBI" id="CHEBI:30616"/>
        <dbReference type="ChEBI" id="CHEBI:32966"/>
        <dbReference type="ChEBI" id="CHEBI:57634"/>
        <dbReference type="ChEBI" id="CHEBI:456216"/>
        <dbReference type="EC" id="2.7.1.11"/>
    </reaction>
</comment>
<comment type="cofactor">
    <cofactor evidence="1">
        <name>Mg(2+)</name>
        <dbReference type="ChEBI" id="CHEBI:18420"/>
    </cofactor>
</comment>
<comment type="activity regulation">
    <text evidence="1">Allosterically activated by ADP and other diphosphonucleosides, and allosterically inhibited by phosphoenolpyruvate.</text>
</comment>
<comment type="pathway">
    <text evidence="1">Carbohydrate degradation; glycolysis; D-glyceraldehyde 3-phosphate and glycerone phosphate from D-glucose: step 3/4.</text>
</comment>
<comment type="subunit">
    <text evidence="1">Homotetramer.</text>
</comment>
<comment type="subcellular location">
    <subcellularLocation>
        <location evidence="1">Cytoplasm</location>
    </subcellularLocation>
</comment>
<comment type="similarity">
    <text evidence="1">Belongs to the phosphofructokinase type A (PFKA) family. ATP-dependent PFK group I subfamily. Prokaryotic clade 'B1' sub-subfamily.</text>
</comment>
<dbReference type="EC" id="2.7.1.11" evidence="1"/>
<dbReference type="EMBL" id="CP000921">
    <property type="protein sequence ID" value="ACO23129.1"/>
    <property type="molecule type" value="Genomic_DNA"/>
</dbReference>
<dbReference type="RefSeq" id="WP_000820852.1">
    <property type="nucleotide sequence ID" value="NC_012469.1"/>
</dbReference>
<dbReference type="SMR" id="C1CRZ7"/>
<dbReference type="GeneID" id="45653754"/>
<dbReference type="KEGG" id="snt:SPT_1303"/>
<dbReference type="HOGENOM" id="CLU_020655_0_1_9"/>
<dbReference type="UniPathway" id="UPA00109">
    <property type="reaction ID" value="UER00182"/>
</dbReference>
<dbReference type="GO" id="GO:0005945">
    <property type="term" value="C:6-phosphofructokinase complex"/>
    <property type="evidence" value="ECO:0007669"/>
    <property type="project" value="TreeGrafter"/>
</dbReference>
<dbReference type="GO" id="GO:0003872">
    <property type="term" value="F:6-phosphofructokinase activity"/>
    <property type="evidence" value="ECO:0007669"/>
    <property type="project" value="UniProtKB-UniRule"/>
</dbReference>
<dbReference type="GO" id="GO:0016208">
    <property type="term" value="F:AMP binding"/>
    <property type="evidence" value="ECO:0007669"/>
    <property type="project" value="TreeGrafter"/>
</dbReference>
<dbReference type="GO" id="GO:0005524">
    <property type="term" value="F:ATP binding"/>
    <property type="evidence" value="ECO:0007669"/>
    <property type="project" value="UniProtKB-KW"/>
</dbReference>
<dbReference type="GO" id="GO:0070095">
    <property type="term" value="F:fructose-6-phosphate binding"/>
    <property type="evidence" value="ECO:0007669"/>
    <property type="project" value="TreeGrafter"/>
</dbReference>
<dbReference type="GO" id="GO:0042802">
    <property type="term" value="F:identical protein binding"/>
    <property type="evidence" value="ECO:0007669"/>
    <property type="project" value="TreeGrafter"/>
</dbReference>
<dbReference type="GO" id="GO:0046872">
    <property type="term" value="F:metal ion binding"/>
    <property type="evidence" value="ECO:0007669"/>
    <property type="project" value="UniProtKB-KW"/>
</dbReference>
<dbReference type="GO" id="GO:0048029">
    <property type="term" value="F:monosaccharide binding"/>
    <property type="evidence" value="ECO:0007669"/>
    <property type="project" value="TreeGrafter"/>
</dbReference>
<dbReference type="GO" id="GO:0061621">
    <property type="term" value="P:canonical glycolysis"/>
    <property type="evidence" value="ECO:0007669"/>
    <property type="project" value="TreeGrafter"/>
</dbReference>
<dbReference type="GO" id="GO:0030388">
    <property type="term" value="P:fructose 1,6-bisphosphate metabolic process"/>
    <property type="evidence" value="ECO:0007669"/>
    <property type="project" value="TreeGrafter"/>
</dbReference>
<dbReference type="GO" id="GO:0006002">
    <property type="term" value="P:fructose 6-phosphate metabolic process"/>
    <property type="evidence" value="ECO:0007669"/>
    <property type="project" value="InterPro"/>
</dbReference>
<dbReference type="CDD" id="cd00763">
    <property type="entry name" value="Bacterial_PFK"/>
    <property type="match status" value="1"/>
</dbReference>
<dbReference type="FunFam" id="3.40.50.450:FF:000001">
    <property type="entry name" value="ATP-dependent 6-phosphofructokinase"/>
    <property type="match status" value="1"/>
</dbReference>
<dbReference type="FunFam" id="3.40.50.460:FF:000002">
    <property type="entry name" value="ATP-dependent 6-phosphofructokinase"/>
    <property type="match status" value="1"/>
</dbReference>
<dbReference type="Gene3D" id="3.40.50.450">
    <property type="match status" value="1"/>
</dbReference>
<dbReference type="Gene3D" id="3.40.50.460">
    <property type="entry name" value="Phosphofructokinase domain"/>
    <property type="match status" value="1"/>
</dbReference>
<dbReference type="HAMAP" id="MF_00339">
    <property type="entry name" value="Phosphofructokinase_I_B1"/>
    <property type="match status" value="1"/>
</dbReference>
<dbReference type="InterPro" id="IPR022953">
    <property type="entry name" value="ATP_PFK"/>
</dbReference>
<dbReference type="InterPro" id="IPR012003">
    <property type="entry name" value="ATP_PFK_prok-type"/>
</dbReference>
<dbReference type="InterPro" id="IPR012828">
    <property type="entry name" value="PFKA_ATP_prok"/>
</dbReference>
<dbReference type="InterPro" id="IPR015912">
    <property type="entry name" value="Phosphofructokinase_CS"/>
</dbReference>
<dbReference type="InterPro" id="IPR000023">
    <property type="entry name" value="Phosphofructokinase_dom"/>
</dbReference>
<dbReference type="InterPro" id="IPR035966">
    <property type="entry name" value="PKF_sf"/>
</dbReference>
<dbReference type="NCBIfam" id="TIGR02482">
    <property type="entry name" value="PFKA_ATP"/>
    <property type="match status" value="1"/>
</dbReference>
<dbReference type="NCBIfam" id="NF002872">
    <property type="entry name" value="PRK03202.1"/>
    <property type="match status" value="1"/>
</dbReference>
<dbReference type="PANTHER" id="PTHR13697:SF4">
    <property type="entry name" value="ATP-DEPENDENT 6-PHOSPHOFRUCTOKINASE"/>
    <property type="match status" value="1"/>
</dbReference>
<dbReference type="PANTHER" id="PTHR13697">
    <property type="entry name" value="PHOSPHOFRUCTOKINASE"/>
    <property type="match status" value="1"/>
</dbReference>
<dbReference type="Pfam" id="PF00365">
    <property type="entry name" value="PFK"/>
    <property type="match status" value="1"/>
</dbReference>
<dbReference type="PIRSF" id="PIRSF000532">
    <property type="entry name" value="ATP_PFK_prok"/>
    <property type="match status" value="1"/>
</dbReference>
<dbReference type="PRINTS" id="PR00476">
    <property type="entry name" value="PHFRCTKINASE"/>
</dbReference>
<dbReference type="SUPFAM" id="SSF53784">
    <property type="entry name" value="Phosphofructokinase"/>
    <property type="match status" value="1"/>
</dbReference>
<dbReference type="PROSITE" id="PS00433">
    <property type="entry name" value="PHOSPHOFRUCTOKINASE"/>
    <property type="match status" value="1"/>
</dbReference>